<comment type="function">
    <text>Catalyzes the conversion of hemimercaptal, formed from methylglyoxal and glutathione, to S-lactoylglutathione.</text>
</comment>
<comment type="catalytic activity">
    <reaction>
        <text>(R)-S-lactoylglutathione = methylglyoxal + glutathione</text>
        <dbReference type="Rhea" id="RHEA:19069"/>
        <dbReference type="ChEBI" id="CHEBI:17158"/>
        <dbReference type="ChEBI" id="CHEBI:57474"/>
        <dbReference type="ChEBI" id="CHEBI:57925"/>
        <dbReference type="EC" id="4.4.1.5"/>
    </reaction>
</comment>
<comment type="cofactor">
    <cofactor evidence="1">
        <name>Ni(2+)</name>
        <dbReference type="ChEBI" id="CHEBI:49786"/>
    </cofactor>
    <text evidence="1">Binds 1 nickel ion per subunit. In the homodimer, two nickel ions are bound between subunits.</text>
</comment>
<comment type="pathway">
    <text>Secondary metabolite metabolism; methylglyoxal degradation; (R)-lactate from methylglyoxal: step 1/2.</text>
</comment>
<comment type="subunit">
    <text evidence="1">Homodimer.</text>
</comment>
<comment type="similarity">
    <text evidence="3">Belongs to the glyoxalase I family.</text>
</comment>
<organism>
    <name type="scientific">Salmonella typhimurium (strain LT2 / SGSC1412 / ATCC 700720)</name>
    <dbReference type="NCBI Taxonomy" id="99287"/>
    <lineage>
        <taxon>Bacteria</taxon>
        <taxon>Pseudomonadati</taxon>
        <taxon>Pseudomonadota</taxon>
        <taxon>Gammaproteobacteria</taxon>
        <taxon>Enterobacterales</taxon>
        <taxon>Enterobacteriaceae</taxon>
        <taxon>Salmonella</taxon>
    </lineage>
</organism>
<sequence>MRLLHTMLRVGDLQRSIAFYTNVLGMKLLRTSENPEYKYSLAFVGYGPETEEAVIELTYNWGVESYDMGNAYGHIALSVDNAAEACERIRQNGGNVTREAGPVKGGSTIIAFVEDPDGYKIELIEAKDAGRGLGN</sequence>
<name>LGUL_SALTY</name>
<feature type="chain" id="PRO_0000168091" description="Lactoylglutathione lyase">
    <location>
        <begin position="1"/>
        <end position="135"/>
    </location>
</feature>
<feature type="domain" description="VOC" evidence="2">
    <location>
        <begin position="2"/>
        <end position="126"/>
    </location>
</feature>
<feature type="active site" description="Proton donor/acceptor" evidence="1">
    <location>
        <position position="122"/>
    </location>
</feature>
<feature type="binding site" evidence="1">
    <location>
        <position position="5"/>
    </location>
    <ligand>
        <name>Ni(2+)</name>
        <dbReference type="ChEBI" id="CHEBI:49786"/>
        <note>ligand shared between dimeric partners</note>
    </ligand>
</feature>
<feature type="binding site" evidence="1">
    <location>
        <position position="9"/>
    </location>
    <ligand>
        <name>substrate</name>
        <note>ligand shared between dimeric partners</note>
    </ligand>
</feature>
<feature type="binding site" evidence="1">
    <location>
        <position position="56"/>
    </location>
    <ligand>
        <name>Ni(2+)</name>
        <dbReference type="ChEBI" id="CHEBI:49786"/>
        <note>ligand shared between dimeric partners</note>
    </ligand>
</feature>
<feature type="binding site" evidence="1">
    <location>
        <position position="60"/>
    </location>
    <ligand>
        <name>substrate</name>
        <note>ligand shared between dimeric partners</note>
    </ligand>
</feature>
<feature type="binding site" description="in other chain" evidence="1">
    <location>
        <position position="74"/>
    </location>
    <ligand>
        <name>Ni(2+)</name>
        <dbReference type="ChEBI" id="CHEBI:49786"/>
        <note>ligand shared between dimeric partners</note>
    </ligand>
</feature>
<feature type="binding site" description="in other chain" evidence="1">
    <location>
        <position position="74"/>
    </location>
    <ligand>
        <name>substrate</name>
        <note>ligand shared between dimeric partners</note>
    </ligand>
</feature>
<feature type="binding site" description="in other chain" evidence="1">
    <location>
        <position position="122"/>
    </location>
    <ligand>
        <name>Ni(2+)</name>
        <dbReference type="ChEBI" id="CHEBI:49786"/>
        <note>ligand shared between dimeric partners</note>
    </ligand>
</feature>
<feature type="sequence conflict" description="In Ref. 1; AAC44877." evidence="3" ref="1">
    <original>A</original>
    <variation>G</variation>
    <location>
        <position position="76"/>
    </location>
</feature>
<reference key="1">
    <citation type="journal article" date="1997" name="Gene">
        <title>Isolation and sequencing of a gene coding for glyoxalase I activity from Salmonella typhimurium and comparison with other glyoxalase I sequences.</title>
        <authorList>
            <person name="Clugston S.L."/>
            <person name="Daub E."/>
            <person name="Kinach R."/>
            <person name="Miedema D."/>
            <person name="Barnard J.F.J."/>
            <person name="Honek J.F."/>
        </authorList>
    </citation>
    <scope>NUCLEOTIDE SEQUENCE [GENOMIC DNA]</scope>
    <source>
        <strain>D21</strain>
    </source>
</reference>
<reference key="2">
    <citation type="journal article" date="2001" name="Nature">
        <title>Complete genome sequence of Salmonella enterica serovar Typhimurium LT2.</title>
        <authorList>
            <person name="McClelland M."/>
            <person name="Sanderson K.E."/>
            <person name="Spieth J."/>
            <person name="Clifton S.W."/>
            <person name="Latreille P."/>
            <person name="Courtney L."/>
            <person name="Porwollik S."/>
            <person name="Ali J."/>
            <person name="Dante M."/>
            <person name="Du F."/>
            <person name="Hou S."/>
            <person name="Layman D."/>
            <person name="Leonard S."/>
            <person name="Nguyen C."/>
            <person name="Scott K."/>
            <person name="Holmes A."/>
            <person name="Grewal N."/>
            <person name="Mulvaney E."/>
            <person name="Ryan E."/>
            <person name="Sun H."/>
            <person name="Florea L."/>
            <person name="Miller W."/>
            <person name="Stoneking T."/>
            <person name="Nhan M."/>
            <person name="Waterston R."/>
            <person name="Wilson R.K."/>
        </authorList>
    </citation>
    <scope>NUCLEOTIDE SEQUENCE [LARGE SCALE GENOMIC DNA]</scope>
    <source>
        <strain>LT2 / SGSC1412 / ATCC 700720</strain>
    </source>
</reference>
<gene>
    <name type="primary">gloA</name>
    <name type="ordered locus">STM1435</name>
</gene>
<proteinExistence type="inferred from homology"/>
<keyword id="KW-0456">Lyase</keyword>
<keyword id="KW-0479">Metal-binding</keyword>
<keyword id="KW-0533">Nickel</keyword>
<keyword id="KW-1185">Reference proteome</keyword>
<protein>
    <recommendedName>
        <fullName>Lactoylglutathione lyase</fullName>
        <ecNumber>4.4.1.5</ecNumber>
    </recommendedName>
    <alternativeName>
        <fullName>Aldoketomutase</fullName>
    </alternativeName>
    <alternativeName>
        <fullName>Glyoxalase I</fullName>
        <shortName>Glx I</shortName>
    </alternativeName>
    <alternativeName>
        <fullName>Ketone-aldehyde mutase</fullName>
    </alternativeName>
    <alternativeName>
        <fullName>Methylglyoxalase</fullName>
    </alternativeName>
    <alternativeName>
        <fullName>S-D-lactoylglutathione methylglyoxal lyase</fullName>
    </alternativeName>
</protein>
<dbReference type="EC" id="4.4.1.5"/>
<dbReference type="EMBL" id="U57364">
    <property type="protein sequence ID" value="AAC44877.1"/>
    <property type="molecule type" value="Genomic_DNA"/>
</dbReference>
<dbReference type="EMBL" id="AE006468">
    <property type="protein sequence ID" value="AAL20357.1"/>
    <property type="molecule type" value="Genomic_DNA"/>
</dbReference>
<dbReference type="PIR" id="JC6313">
    <property type="entry name" value="JC6313"/>
</dbReference>
<dbReference type="RefSeq" id="NP_460398.1">
    <property type="nucleotide sequence ID" value="NC_003197.2"/>
</dbReference>
<dbReference type="RefSeq" id="WP_001237787.1">
    <property type="nucleotide sequence ID" value="NC_003197.2"/>
</dbReference>
<dbReference type="SMR" id="P0A1Q2"/>
<dbReference type="STRING" id="99287.STM1435"/>
<dbReference type="PaxDb" id="99287-STM1435"/>
<dbReference type="GeneID" id="1252953"/>
<dbReference type="KEGG" id="stm:STM1435"/>
<dbReference type="PATRIC" id="fig|99287.12.peg.1518"/>
<dbReference type="HOGENOM" id="CLU_046006_8_1_6"/>
<dbReference type="OMA" id="THNWDTP"/>
<dbReference type="PhylomeDB" id="P0A1Q2"/>
<dbReference type="BioCyc" id="SENT99287:STM1435-MONOMER"/>
<dbReference type="UniPathway" id="UPA00619">
    <property type="reaction ID" value="UER00675"/>
</dbReference>
<dbReference type="Proteomes" id="UP000001014">
    <property type="component" value="Chromosome"/>
</dbReference>
<dbReference type="GO" id="GO:0005737">
    <property type="term" value="C:cytoplasm"/>
    <property type="evidence" value="ECO:0000318"/>
    <property type="project" value="GO_Central"/>
</dbReference>
<dbReference type="GO" id="GO:0004462">
    <property type="term" value="F:lactoylglutathione lyase activity"/>
    <property type="evidence" value="ECO:0000318"/>
    <property type="project" value="GO_Central"/>
</dbReference>
<dbReference type="GO" id="GO:0046872">
    <property type="term" value="F:metal ion binding"/>
    <property type="evidence" value="ECO:0007669"/>
    <property type="project" value="UniProtKB-KW"/>
</dbReference>
<dbReference type="GO" id="GO:0019243">
    <property type="term" value="P:methylglyoxal catabolic process to D-lactate via S-lactoyl-glutathione"/>
    <property type="evidence" value="ECO:0000318"/>
    <property type="project" value="GO_Central"/>
</dbReference>
<dbReference type="CDD" id="cd16358">
    <property type="entry name" value="GlxI_Ni"/>
    <property type="match status" value="1"/>
</dbReference>
<dbReference type="FunFam" id="3.10.180.10:FF:000002">
    <property type="entry name" value="Lactoylglutathione lyase"/>
    <property type="match status" value="1"/>
</dbReference>
<dbReference type="Gene3D" id="3.10.180.10">
    <property type="entry name" value="2,3-Dihydroxybiphenyl 1,2-Dioxygenase, domain 1"/>
    <property type="match status" value="1"/>
</dbReference>
<dbReference type="InterPro" id="IPR029068">
    <property type="entry name" value="Glyas_Bleomycin-R_OHBP_Dase"/>
</dbReference>
<dbReference type="InterPro" id="IPR004360">
    <property type="entry name" value="Glyas_Fos-R_dOase_dom"/>
</dbReference>
<dbReference type="InterPro" id="IPR004361">
    <property type="entry name" value="Glyoxalase_1"/>
</dbReference>
<dbReference type="InterPro" id="IPR018146">
    <property type="entry name" value="Glyoxalase_1_CS"/>
</dbReference>
<dbReference type="InterPro" id="IPR037523">
    <property type="entry name" value="VOC"/>
</dbReference>
<dbReference type="NCBIfam" id="TIGR00068">
    <property type="entry name" value="glyox_I"/>
    <property type="match status" value="1"/>
</dbReference>
<dbReference type="NCBIfam" id="NF007629">
    <property type="entry name" value="PRK10291.1"/>
    <property type="match status" value="1"/>
</dbReference>
<dbReference type="PANTHER" id="PTHR46036">
    <property type="entry name" value="LACTOYLGLUTATHIONE LYASE"/>
    <property type="match status" value="1"/>
</dbReference>
<dbReference type="PANTHER" id="PTHR46036:SF5">
    <property type="entry name" value="LACTOYLGLUTATHIONE LYASE"/>
    <property type="match status" value="1"/>
</dbReference>
<dbReference type="Pfam" id="PF00903">
    <property type="entry name" value="Glyoxalase"/>
    <property type="match status" value="1"/>
</dbReference>
<dbReference type="SUPFAM" id="SSF54593">
    <property type="entry name" value="Glyoxalase/Bleomycin resistance protein/Dihydroxybiphenyl dioxygenase"/>
    <property type="match status" value="1"/>
</dbReference>
<dbReference type="PROSITE" id="PS00934">
    <property type="entry name" value="GLYOXALASE_I_1"/>
    <property type="match status" value="1"/>
</dbReference>
<dbReference type="PROSITE" id="PS00935">
    <property type="entry name" value="GLYOXALASE_I_2"/>
    <property type="match status" value="1"/>
</dbReference>
<dbReference type="PROSITE" id="PS51819">
    <property type="entry name" value="VOC"/>
    <property type="match status" value="1"/>
</dbReference>
<evidence type="ECO:0000250" key="1"/>
<evidence type="ECO:0000255" key="2">
    <source>
        <dbReference type="PROSITE-ProRule" id="PRU01163"/>
    </source>
</evidence>
<evidence type="ECO:0000305" key="3"/>
<accession>P0A1Q2</accession>
<accession>Q60003</accession>